<evidence type="ECO:0000255" key="1">
    <source>
        <dbReference type="HAMAP-Rule" id="MF_00378"/>
    </source>
</evidence>
<name>EX7L_ENT38</name>
<proteinExistence type="inferred from homology"/>
<dbReference type="EC" id="3.1.11.6" evidence="1"/>
<dbReference type="EMBL" id="CP000653">
    <property type="protein sequence ID" value="ABP61664.1"/>
    <property type="molecule type" value="Genomic_DNA"/>
</dbReference>
<dbReference type="RefSeq" id="WP_015959996.1">
    <property type="nucleotide sequence ID" value="NC_009436.1"/>
</dbReference>
<dbReference type="SMR" id="A4WD84"/>
<dbReference type="STRING" id="399742.Ent638_3000"/>
<dbReference type="KEGG" id="ent:Ent638_3000"/>
<dbReference type="eggNOG" id="COG1570">
    <property type="taxonomic scope" value="Bacteria"/>
</dbReference>
<dbReference type="HOGENOM" id="CLU_023625_3_1_6"/>
<dbReference type="OrthoDB" id="9802795at2"/>
<dbReference type="Proteomes" id="UP000000230">
    <property type="component" value="Chromosome"/>
</dbReference>
<dbReference type="GO" id="GO:0005737">
    <property type="term" value="C:cytoplasm"/>
    <property type="evidence" value="ECO:0007669"/>
    <property type="project" value="UniProtKB-SubCell"/>
</dbReference>
<dbReference type="GO" id="GO:0009318">
    <property type="term" value="C:exodeoxyribonuclease VII complex"/>
    <property type="evidence" value="ECO:0007669"/>
    <property type="project" value="InterPro"/>
</dbReference>
<dbReference type="GO" id="GO:0008855">
    <property type="term" value="F:exodeoxyribonuclease VII activity"/>
    <property type="evidence" value="ECO:0007669"/>
    <property type="project" value="UniProtKB-UniRule"/>
</dbReference>
<dbReference type="GO" id="GO:0003676">
    <property type="term" value="F:nucleic acid binding"/>
    <property type="evidence" value="ECO:0007669"/>
    <property type="project" value="InterPro"/>
</dbReference>
<dbReference type="GO" id="GO:0006308">
    <property type="term" value="P:DNA catabolic process"/>
    <property type="evidence" value="ECO:0007669"/>
    <property type="project" value="UniProtKB-UniRule"/>
</dbReference>
<dbReference type="CDD" id="cd04489">
    <property type="entry name" value="ExoVII_LU_OBF"/>
    <property type="match status" value="1"/>
</dbReference>
<dbReference type="HAMAP" id="MF_00378">
    <property type="entry name" value="Exonuc_7_L"/>
    <property type="match status" value="1"/>
</dbReference>
<dbReference type="InterPro" id="IPR003753">
    <property type="entry name" value="Exonuc_VII_L"/>
</dbReference>
<dbReference type="InterPro" id="IPR020579">
    <property type="entry name" value="Exonuc_VII_lsu_C"/>
</dbReference>
<dbReference type="InterPro" id="IPR025824">
    <property type="entry name" value="OB-fold_nuc-bd_dom"/>
</dbReference>
<dbReference type="NCBIfam" id="TIGR00237">
    <property type="entry name" value="xseA"/>
    <property type="match status" value="1"/>
</dbReference>
<dbReference type="PANTHER" id="PTHR30008">
    <property type="entry name" value="EXODEOXYRIBONUCLEASE 7 LARGE SUBUNIT"/>
    <property type="match status" value="1"/>
</dbReference>
<dbReference type="PANTHER" id="PTHR30008:SF0">
    <property type="entry name" value="EXODEOXYRIBONUCLEASE 7 LARGE SUBUNIT"/>
    <property type="match status" value="1"/>
</dbReference>
<dbReference type="Pfam" id="PF02601">
    <property type="entry name" value="Exonuc_VII_L"/>
    <property type="match status" value="1"/>
</dbReference>
<dbReference type="Pfam" id="PF13742">
    <property type="entry name" value="tRNA_anti_2"/>
    <property type="match status" value="1"/>
</dbReference>
<sequence length="457" mass="51886">MLSSQSPSIYTVSRLNQSVRLLLEQEMGQVWISGEISNFTQPSSGHWYFTLKDDNAQVRCAMFRNSNRRVTFRPQHGQQVLVRANITLYEPRGDYQIIVESMQPAGEGLLQQKYEQLKAKLSAEGLFDQQFKKPLPSPAHCVGVITSKTGAALHDILHVLKRRDPSLPVIIYPTAVQGDDAPGQIVRAIELANARHECDVLIVGRGGGSLEDLWSFNDERVARAIFASQIPVVSAVGHETDVTIADFVSDMRAPTPSAAAEVVSRNQQELLRQMQNGQQRLEMAMDYFLANRTRRFTQLHHRLQQQHPQLRLERQQTVLERLRQRMNFALDNQLKRVVSHQQRMTQRLNQQNPQPKIYRTQTRIQQLEYRLAENLRARLSTTRERFGNAVTHLEAVSPLSTLARGYSVTTATDGKVLKQTKQVKAGDLMTTRLADGWVESEVKGITPAKKTRKKKPV</sequence>
<organism>
    <name type="scientific">Enterobacter sp. (strain 638)</name>
    <dbReference type="NCBI Taxonomy" id="399742"/>
    <lineage>
        <taxon>Bacteria</taxon>
        <taxon>Pseudomonadati</taxon>
        <taxon>Pseudomonadota</taxon>
        <taxon>Gammaproteobacteria</taxon>
        <taxon>Enterobacterales</taxon>
        <taxon>Enterobacteriaceae</taxon>
        <taxon>Enterobacter</taxon>
    </lineage>
</organism>
<comment type="function">
    <text evidence="1">Bidirectionally degrades single-stranded DNA into large acid-insoluble oligonucleotides, which are then degraded further into small acid-soluble oligonucleotides.</text>
</comment>
<comment type="catalytic activity">
    <reaction evidence="1">
        <text>Exonucleolytic cleavage in either 5'- to 3'- or 3'- to 5'-direction to yield nucleoside 5'-phosphates.</text>
        <dbReference type="EC" id="3.1.11.6"/>
    </reaction>
</comment>
<comment type="subunit">
    <text evidence="1">Heterooligomer composed of large and small subunits.</text>
</comment>
<comment type="subcellular location">
    <subcellularLocation>
        <location evidence="1">Cytoplasm</location>
    </subcellularLocation>
</comment>
<comment type="similarity">
    <text evidence="1">Belongs to the XseA family.</text>
</comment>
<accession>A4WD84</accession>
<gene>
    <name evidence="1" type="primary">xseA</name>
    <name type="ordered locus">Ent638_3000</name>
</gene>
<protein>
    <recommendedName>
        <fullName evidence="1">Exodeoxyribonuclease 7 large subunit</fullName>
        <ecNumber evidence="1">3.1.11.6</ecNumber>
    </recommendedName>
    <alternativeName>
        <fullName evidence="1">Exodeoxyribonuclease VII large subunit</fullName>
        <shortName evidence="1">Exonuclease VII large subunit</shortName>
    </alternativeName>
</protein>
<keyword id="KW-0963">Cytoplasm</keyword>
<keyword id="KW-0269">Exonuclease</keyword>
<keyword id="KW-0378">Hydrolase</keyword>
<keyword id="KW-0540">Nuclease</keyword>
<feature type="chain" id="PRO_1000060028" description="Exodeoxyribonuclease 7 large subunit">
    <location>
        <begin position="1"/>
        <end position="457"/>
    </location>
</feature>
<reference key="1">
    <citation type="journal article" date="2010" name="PLoS Genet.">
        <title>Genome sequence of the plant growth promoting endophytic bacterium Enterobacter sp. 638.</title>
        <authorList>
            <person name="Taghavi S."/>
            <person name="van der Lelie D."/>
            <person name="Hoffman A."/>
            <person name="Zhang Y.B."/>
            <person name="Walla M.D."/>
            <person name="Vangronsveld J."/>
            <person name="Newman L."/>
            <person name="Monchy S."/>
        </authorList>
    </citation>
    <scope>NUCLEOTIDE SEQUENCE [LARGE SCALE GENOMIC DNA]</scope>
    <source>
        <strain>638</strain>
    </source>
</reference>